<keyword id="KW-0032">Aminotransferase</keyword>
<keyword id="KW-0963">Cytoplasm</keyword>
<keyword id="KW-0315">Glutamine amidotransferase</keyword>
<keyword id="KW-0536">Nodulation</keyword>
<keyword id="KW-0614">Plasmid</keyword>
<keyword id="KW-0808">Transferase</keyword>
<name>NODM_RHILT</name>
<accession>Q52846</accession>
<evidence type="ECO:0000250" key="1"/>
<evidence type="ECO:0000255" key="2">
    <source>
        <dbReference type="PROSITE-ProRule" id="PRU00609"/>
    </source>
</evidence>
<reference key="1">
    <citation type="unpublished observations" date="1991-05">
        <authorList>
            <person name="Weinman J.J."/>
        </authorList>
    </citation>
    <scope>NUCLEOTIDE SEQUENCE [GENOMIC DNA]</scope>
    <source>
        <strain>ANU 843</strain>
    </source>
</reference>
<gene>
    <name type="primary">nodM</name>
</gene>
<protein>
    <recommendedName>
        <fullName>Glutamine--fructose-6-phosphate aminotransferase [isomerizing]</fullName>
        <shortName>GFAT</shortName>
        <ecNumber>2.6.1.16</ecNumber>
    </recommendedName>
    <alternativeName>
        <fullName>Nodulation protein M</fullName>
    </alternativeName>
</protein>
<geneLocation type="plasmid">
    <name>sym pRtr843e</name>
</geneLocation>
<proteinExistence type="inferred from homology"/>
<dbReference type="EC" id="2.6.1.16"/>
<dbReference type="EMBL" id="M65246">
    <property type="protein sequence ID" value="AAA26340.1"/>
    <property type="molecule type" value="Genomic_DNA"/>
</dbReference>
<dbReference type="SMR" id="Q52846"/>
<dbReference type="MEROPS" id="C44.971"/>
<dbReference type="GO" id="GO:0005829">
    <property type="term" value="C:cytosol"/>
    <property type="evidence" value="ECO:0007669"/>
    <property type="project" value="TreeGrafter"/>
</dbReference>
<dbReference type="GO" id="GO:0004360">
    <property type="term" value="F:glutamine-fructose-6-phosphate transaminase (isomerizing) activity"/>
    <property type="evidence" value="ECO:0007669"/>
    <property type="project" value="UniProtKB-EC"/>
</dbReference>
<dbReference type="GO" id="GO:0006002">
    <property type="term" value="P:fructose 6-phosphate metabolic process"/>
    <property type="evidence" value="ECO:0007669"/>
    <property type="project" value="TreeGrafter"/>
</dbReference>
<dbReference type="GO" id="GO:0006487">
    <property type="term" value="P:protein N-linked glycosylation"/>
    <property type="evidence" value="ECO:0007669"/>
    <property type="project" value="TreeGrafter"/>
</dbReference>
<dbReference type="GO" id="GO:0006047">
    <property type="term" value="P:UDP-N-acetylglucosamine metabolic process"/>
    <property type="evidence" value="ECO:0007669"/>
    <property type="project" value="TreeGrafter"/>
</dbReference>
<dbReference type="Gene3D" id="3.60.20.10">
    <property type="entry name" value="Glutamine Phosphoribosylpyrophosphate, subunit 1, domain 1"/>
    <property type="match status" value="1"/>
</dbReference>
<dbReference type="InterPro" id="IPR017932">
    <property type="entry name" value="GATase_2_dom"/>
</dbReference>
<dbReference type="InterPro" id="IPR029055">
    <property type="entry name" value="Ntn_hydrolases_N"/>
</dbReference>
<dbReference type="PANTHER" id="PTHR10937">
    <property type="entry name" value="GLUCOSAMINE--FRUCTOSE-6-PHOSPHATE AMINOTRANSFERASE, ISOMERIZING"/>
    <property type="match status" value="1"/>
</dbReference>
<dbReference type="PANTHER" id="PTHR10937:SF0">
    <property type="entry name" value="GLUTAMINE--FRUCTOSE-6-PHOSPHATE TRANSAMINASE (ISOMERIZING)"/>
    <property type="match status" value="1"/>
</dbReference>
<dbReference type="Pfam" id="PF13522">
    <property type="entry name" value="GATase_6"/>
    <property type="match status" value="1"/>
</dbReference>
<dbReference type="SUPFAM" id="SSF56235">
    <property type="entry name" value="N-terminal nucleophile aminohydrolases (Ntn hydrolases)"/>
    <property type="match status" value="1"/>
</dbReference>
<dbReference type="PROSITE" id="PS51278">
    <property type="entry name" value="GATASE_TYPE_2"/>
    <property type="match status" value="1"/>
</dbReference>
<sequence>AGVATISGGNLERCRAQGKLVNLEMRLEQQPLNGMIGIGHTRWATHGAPTERNAHPHIVDGIAVVHNGIIENFAELKAELEATGADFETSTDSEVVAHLLAK</sequence>
<feature type="chain" id="PRO_0000135435" description="Glutamine--fructose-6-phosphate aminotransferase [isomerizing]">
    <location>
        <begin position="1" status="less than"/>
        <end position="102" status="greater than"/>
    </location>
</feature>
<feature type="domain" description="Glutamine amidotransferase type-2" evidence="2">
    <location>
        <begin position="1" status="less than"/>
        <end position="102" status="greater than"/>
    </location>
</feature>
<feature type="non-terminal residue">
    <location>
        <position position="1"/>
    </location>
</feature>
<feature type="non-terminal residue">
    <location>
        <position position="102"/>
    </location>
</feature>
<comment type="function">
    <text>Involved in the production of the root hair deformation (HAD) factor specifically on medicago.</text>
</comment>
<comment type="catalytic activity">
    <reaction>
        <text>D-fructose 6-phosphate + L-glutamine = D-glucosamine 6-phosphate + L-glutamate</text>
        <dbReference type="Rhea" id="RHEA:13237"/>
        <dbReference type="ChEBI" id="CHEBI:29985"/>
        <dbReference type="ChEBI" id="CHEBI:58359"/>
        <dbReference type="ChEBI" id="CHEBI:58725"/>
        <dbReference type="ChEBI" id="CHEBI:61527"/>
        <dbReference type="EC" id="2.6.1.16"/>
    </reaction>
</comment>
<comment type="subcellular location">
    <subcellularLocation>
        <location evidence="1">Cytoplasm</location>
    </subcellularLocation>
</comment>
<comment type="miscellaneous">
    <text>The nucleotide sequence was reported in PubMed:1673458.</text>
</comment>
<organism>
    <name type="scientific">Rhizobium leguminosarum bv. trifolii</name>
    <dbReference type="NCBI Taxonomy" id="386"/>
    <lineage>
        <taxon>Bacteria</taxon>
        <taxon>Pseudomonadati</taxon>
        <taxon>Pseudomonadota</taxon>
        <taxon>Alphaproteobacteria</taxon>
        <taxon>Hyphomicrobiales</taxon>
        <taxon>Rhizobiaceae</taxon>
        <taxon>Rhizobium/Agrobacterium group</taxon>
        <taxon>Rhizobium</taxon>
    </lineage>
</organism>